<organism>
    <name type="scientific">Arabidopsis thaliana</name>
    <name type="common">Mouse-ear cress</name>
    <dbReference type="NCBI Taxonomy" id="3702"/>
    <lineage>
        <taxon>Eukaryota</taxon>
        <taxon>Viridiplantae</taxon>
        <taxon>Streptophyta</taxon>
        <taxon>Embryophyta</taxon>
        <taxon>Tracheophyta</taxon>
        <taxon>Spermatophyta</taxon>
        <taxon>Magnoliopsida</taxon>
        <taxon>eudicotyledons</taxon>
        <taxon>Gunneridae</taxon>
        <taxon>Pentapetalae</taxon>
        <taxon>rosids</taxon>
        <taxon>malvids</taxon>
        <taxon>Brassicales</taxon>
        <taxon>Brassicaceae</taxon>
        <taxon>Camelineae</taxon>
        <taxon>Arabidopsis</taxon>
    </lineage>
</organism>
<protein>
    <recommendedName>
        <fullName>Callose synthase 7</fullName>
        <ecNumber>2.4.1.34</ecNumber>
    </recommendedName>
    <alternativeName>
        <fullName>1,3-beta-glucan synthase</fullName>
    </alternativeName>
    <alternativeName>
        <fullName>Protein GLUCAN SYNTHASE-LIKE 7</fullName>
    </alternativeName>
</protein>
<dbReference type="EC" id="2.4.1.34"/>
<dbReference type="EMBL" id="AC007592">
    <property type="protein sequence ID" value="AAF24822.1"/>
    <property type="status" value="ALT_SEQ"/>
    <property type="molecule type" value="Genomic_DNA"/>
</dbReference>
<dbReference type="EMBL" id="CP002684">
    <property type="protein sequence ID" value="AEE27993.1"/>
    <property type="molecule type" value="Genomic_DNA"/>
</dbReference>
<dbReference type="PIR" id="F86200">
    <property type="entry name" value="F86200"/>
</dbReference>
<dbReference type="RefSeq" id="NP_172136.2">
    <property type="nucleotide sequence ID" value="NM_100528.3"/>
</dbReference>
<dbReference type="SMR" id="Q9SHJ3"/>
<dbReference type="FunCoup" id="Q9SHJ3">
    <property type="interactions" value="302"/>
</dbReference>
<dbReference type="STRING" id="3702.Q9SHJ3"/>
<dbReference type="CAZy" id="GT48">
    <property type="family name" value="Glycosyltransferase Family 48"/>
</dbReference>
<dbReference type="iPTMnet" id="Q9SHJ3"/>
<dbReference type="PaxDb" id="3702-AT1G06490.1"/>
<dbReference type="EnsemblPlants" id="AT1G06490.1">
    <property type="protein sequence ID" value="AT1G06490.1"/>
    <property type="gene ID" value="AT1G06490"/>
</dbReference>
<dbReference type="GeneID" id="837160"/>
<dbReference type="Gramene" id="AT1G06490.1">
    <property type="protein sequence ID" value="AT1G06490.1"/>
    <property type="gene ID" value="AT1G06490"/>
</dbReference>
<dbReference type="KEGG" id="ath:AT1G06490"/>
<dbReference type="Araport" id="AT1G06490"/>
<dbReference type="TAIR" id="AT1G06490">
    <property type="gene designation" value="CALS7"/>
</dbReference>
<dbReference type="eggNOG" id="KOG0916">
    <property type="taxonomic scope" value="Eukaryota"/>
</dbReference>
<dbReference type="HOGENOM" id="CLU_000742_0_0_1"/>
<dbReference type="InParanoid" id="Q9SHJ3"/>
<dbReference type="OrthoDB" id="1880850at2759"/>
<dbReference type="BioCyc" id="ARA:AT1G06490-MONOMER"/>
<dbReference type="BioCyc" id="MetaCyc:AT1G06490-MONOMER"/>
<dbReference type="PRO" id="PR:Q9SHJ3"/>
<dbReference type="Proteomes" id="UP000006548">
    <property type="component" value="Chromosome 1"/>
</dbReference>
<dbReference type="ExpressionAtlas" id="Q9SHJ3">
    <property type="expression patterns" value="baseline and differential"/>
</dbReference>
<dbReference type="GO" id="GO:0000148">
    <property type="term" value="C:1,3-beta-D-glucan synthase complex"/>
    <property type="evidence" value="ECO:0007669"/>
    <property type="project" value="InterPro"/>
</dbReference>
<dbReference type="GO" id="GO:0005886">
    <property type="term" value="C:plasma membrane"/>
    <property type="evidence" value="ECO:0007669"/>
    <property type="project" value="UniProtKB-SubCell"/>
</dbReference>
<dbReference type="GO" id="GO:0003843">
    <property type="term" value="F:1,3-beta-D-glucan synthase activity"/>
    <property type="evidence" value="ECO:0000315"/>
    <property type="project" value="TAIR"/>
</dbReference>
<dbReference type="GO" id="GO:0006075">
    <property type="term" value="P:(1-&gt;3)-beta-D-glucan biosynthetic process"/>
    <property type="evidence" value="ECO:0007669"/>
    <property type="project" value="InterPro"/>
</dbReference>
<dbReference type="GO" id="GO:0080165">
    <property type="term" value="P:callose deposition in phloem sieve plate"/>
    <property type="evidence" value="ECO:0000315"/>
    <property type="project" value="TAIR"/>
</dbReference>
<dbReference type="GO" id="GO:0071555">
    <property type="term" value="P:cell wall organization"/>
    <property type="evidence" value="ECO:0007669"/>
    <property type="project" value="UniProtKB-KW"/>
</dbReference>
<dbReference type="GO" id="GO:0010233">
    <property type="term" value="P:phloem transport"/>
    <property type="evidence" value="ECO:0000315"/>
    <property type="project" value="TAIR"/>
</dbReference>
<dbReference type="GO" id="GO:0008360">
    <property type="term" value="P:regulation of cell shape"/>
    <property type="evidence" value="ECO:0007669"/>
    <property type="project" value="UniProtKB-KW"/>
</dbReference>
<dbReference type="Gene3D" id="1.25.40.270">
    <property type="entry name" value="Vacuolar protein sorting-associated protein vta1"/>
    <property type="match status" value="1"/>
</dbReference>
<dbReference type="InterPro" id="IPR026899">
    <property type="entry name" value="FKS1-like_dom1"/>
</dbReference>
<dbReference type="InterPro" id="IPR003440">
    <property type="entry name" value="Glyco_trans_48_dom"/>
</dbReference>
<dbReference type="InterPro" id="IPR039431">
    <property type="entry name" value="Vta1/CALS_N"/>
</dbReference>
<dbReference type="InterPro" id="IPR023175">
    <property type="entry name" value="Vta1/CALS_N_sf"/>
</dbReference>
<dbReference type="PANTHER" id="PTHR12741:SF16">
    <property type="entry name" value="CALLOSE SYNTHASE 7"/>
    <property type="match status" value="1"/>
</dbReference>
<dbReference type="PANTHER" id="PTHR12741">
    <property type="entry name" value="LYST-INTERACTING PROTEIN LIP5 DOPAMINE RESPONSIVE PROTEIN DRG-1"/>
    <property type="match status" value="1"/>
</dbReference>
<dbReference type="Pfam" id="PF14288">
    <property type="entry name" value="FKS1_dom1"/>
    <property type="match status" value="1"/>
</dbReference>
<dbReference type="Pfam" id="PF02364">
    <property type="entry name" value="Glucan_synthase"/>
    <property type="match status" value="1"/>
</dbReference>
<dbReference type="Pfam" id="PF04652">
    <property type="entry name" value="Vta1"/>
    <property type="match status" value="1"/>
</dbReference>
<dbReference type="SMART" id="SM01205">
    <property type="entry name" value="FKS1_dom1"/>
    <property type="match status" value="1"/>
</dbReference>
<reference key="1">
    <citation type="journal article" date="2000" name="Nature">
        <title>Sequence and analysis of chromosome 1 of the plant Arabidopsis thaliana.</title>
        <authorList>
            <person name="Theologis A."/>
            <person name="Ecker J.R."/>
            <person name="Palm C.J."/>
            <person name="Federspiel N.A."/>
            <person name="Kaul S."/>
            <person name="White O."/>
            <person name="Alonso J."/>
            <person name="Altafi H."/>
            <person name="Araujo R."/>
            <person name="Bowman C.L."/>
            <person name="Brooks S.Y."/>
            <person name="Buehler E."/>
            <person name="Chan A."/>
            <person name="Chao Q."/>
            <person name="Chen H."/>
            <person name="Cheuk R.F."/>
            <person name="Chin C.W."/>
            <person name="Chung M.K."/>
            <person name="Conn L."/>
            <person name="Conway A.B."/>
            <person name="Conway A.R."/>
            <person name="Creasy T.H."/>
            <person name="Dewar K."/>
            <person name="Dunn P."/>
            <person name="Etgu P."/>
            <person name="Feldblyum T.V."/>
            <person name="Feng J.-D."/>
            <person name="Fong B."/>
            <person name="Fujii C.Y."/>
            <person name="Gill J.E."/>
            <person name="Goldsmith A.D."/>
            <person name="Haas B."/>
            <person name="Hansen N.F."/>
            <person name="Hughes B."/>
            <person name="Huizar L."/>
            <person name="Hunter J.L."/>
            <person name="Jenkins J."/>
            <person name="Johnson-Hopson C."/>
            <person name="Khan S."/>
            <person name="Khaykin E."/>
            <person name="Kim C.J."/>
            <person name="Koo H.L."/>
            <person name="Kremenetskaia I."/>
            <person name="Kurtz D.B."/>
            <person name="Kwan A."/>
            <person name="Lam B."/>
            <person name="Langin-Hooper S."/>
            <person name="Lee A."/>
            <person name="Lee J.M."/>
            <person name="Lenz C.A."/>
            <person name="Li J.H."/>
            <person name="Li Y.-P."/>
            <person name="Lin X."/>
            <person name="Liu S.X."/>
            <person name="Liu Z.A."/>
            <person name="Luros J.S."/>
            <person name="Maiti R."/>
            <person name="Marziali A."/>
            <person name="Militscher J."/>
            <person name="Miranda M."/>
            <person name="Nguyen M."/>
            <person name="Nierman W.C."/>
            <person name="Osborne B.I."/>
            <person name="Pai G."/>
            <person name="Peterson J."/>
            <person name="Pham P.K."/>
            <person name="Rizzo M."/>
            <person name="Rooney T."/>
            <person name="Rowley D."/>
            <person name="Sakano H."/>
            <person name="Salzberg S.L."/>
            <person name="Schwartz J.R."/>
            <person name="Shinn P."/>
            <person name="Southwick A.M."/>
            <person name="Sun H."/>
            <person name="Tallon L.J."/>
            <person name="Tambunga G."/>
            <person name="Toriumi M.J."/>
            <person name="Town C.D."/>
            <person name="Utterback T."/>
            <person name="Van Aken S."/>
            <person name="Vaysberg M."/>
            <person name="Vysotskaia V.S."/>
            <person name="Walker M."/>
            <person name="Wu D."/>
            <person name="Yu G."/>
            <person name="Fraser C.M."/>
            <person name="Venter J.C."/>
            <person name="Davis R.W."/>
        </authorList>
    </citation>
    <scope>NUCLEOTIDE SEQUENCE [LARGE SCALE GENOMIC DNA]</scope>
    <source>
        <strain>cv. Columbia</strain>
    </source>
</reference>
<reference key="2">
    <citation type="journal article" date="2017" name="Plant J.">
        <title>Araport11: a complete reannotation of the Arabidopsis thaliana reference genome.</title>
        <authorList>
            <person name="Cheng C.Y."/>
            <person name="Krishnakumar V."/>
            <person name="Chan A.P."/>
            <person name="Thibaud-Nissen F."/>
            <person name="Schobel S."/>
            <person name="Town C.D."/>
        </authorList>
    </citation>
    <scope>GENOME REANNOTATION</scope>
    <source>
        <strain>cv. Columbia</strain>
    </source>
</reference>
<reference key="3">
    <citation type="journal article" date="2001" name="Plant Cell">
        <title>A cell plate-specific callose synthase and its interaction with phragmoplastin.</title>
        <authorList>
            <person name="Hong Z."/>
            <person name="Delauney A.J."/>
            <person name="Verma D.P.S."/>
        </authorList>
    </citation>
    <scope>GENE FAMILY</scope>
    <scope>NOMENCLATURE</scope>
</reference>
<reference key="4">
    <citation type="journal article" date="2005" name="Plant Mol. Biol.">
        <title>Two callose synthases, GSL1 and GSL5, play an essential and redundant role in plant and pollen development and in fertility.</title>
        <authorList>
            <person name="Enns L.C."/>
            <person name="Kanaoka M.M."/>
            <person name="Torii K.U."/>
            <person name="Comai L."/>
            <person name="Okada K."/>
            <person name="Cleland R.E."/>
        </authorList>
    </citation>
    <scope>NOMENCLATURE</scope>
</reference>
<sequence>MASTSSGGRGEDGRPPQMQPVRSMSRKMTRAGTMMIEHPNEDERPIDSELVPSSLASIAPILRVANDIDQDNARVAYLCRFHAFEKAHRMDPTSSGRGVRQFKTYLLHKLEEEEEITEHMLAKSDPREIQLYYQTFYENNIQDGEGKKTPEEMAKLYQIATVLYDVLKTVVPQARIDDKTLRYAKEVERKKEQYEHYNILPLYALGAKTAVMELPEIKAAILAVCNVDNLPRPRFHSASANLDEVDRERGRSFNDILEWLALVFGFQRGNVANQREHLILLLANIDVRKRDLENYVEIKPSTVRKLMEKYFKNYNSWCKYLRCDSYLRFPAGCDKQQLSLLYIGLYLLIWGEASNVRFMPECLCYIFHNMANEVHGILFGNVYPVTGDTYEAGAPDEEAFLRNVITPIYQVLRKEVRRNKNGKASHSKWRNYDDLNEYFWDKRCFRLKWPMNFKADFFIHTDEISQVPNQRHDQVSHGKRKPKTNFVEARTFWNLYRSFDRMWMFLVLSLQTMIIVAWHPSGSILAIFTEDVFRNVLTIFITSAFLNLLQATLDLVLSFGAWKSLKFSQIMRYITKFLMAAMWAIMLPITYSKSVQNPTGLIKFFSSWVGSWLHRSLYDYAIALYVLPNILAAVFFLLPPLRRIMERSNMRIVTLIMWWAQPKLYIGRGMHEEMFALFKYTFFWVMLLLSKLAFSYYVEILPLVNPTKLIWDMHVVNYEWHEFFPNATHNIGVIIAIWGPIVLVYFMDTQIWYAIFSTLFGGIYGAFSHLGEIRTLGMLRSRFKVVPSAFCSKLTPLPLGHAKRKHLDETVDEKDIARFSQMWNKFIHTMRDEDLISDRERDLLLVPSSSGDVTVVQWPPFLLASKIPIALDMAKDFKGKEDVDLFKKIKSEYYMHYAVVEAYETVRDIIYGLLQDESDKRIVREICYEVDISIQQHRFLSEFRMTGMPLLSDKLEKFLKILLSDYEEDDYKSQIINVLQDIIEIITQDVMVNGHEILERAHLQSGDIESDKKEQRFEKIDLSLTQNISWREKVVRLLLLLTVKESAINIPQSLEARRRMTFFANSLFMNMPDAPRVRDMLSFSVLTPYYKEDVLYSEEELNKENEDGITILFYLQRIYPEEWSNYCERVNDLKRNLSEKDKAEQLRQWVSYRGQTLSRTVRGMMYYRVALELQCFQEYTEENATNGGYLPSESNEDDRKAFSDRARALADLKFTYVVSCQVYGNQKKSSESRDRSCYNNILQLMLKYPSLRVAYIDEREETVNGKSQKVFYSVLLKGCDKLDEEIYRIKLPGPPTEIGEGKPENQNHAIIFTRGEALQTIDMNQDNYFEECFKMRNVLQEFDEGRRGKRNPTILGLREHIFTGSVSSLAWFMSNQETSFVTIGQRVLANPLRVRFHYGHPDIFDRIFHITRGGISKASKIINLSEDIFAGYNSTLRGGYVTHHEYIQAGKGRDVGMNQISFFEAKVANGNGEQTLSRDVYRLGRRFDFYRMLSFYFTTVGFYFSSMITVLTVYVFLYGRLYLVLSGLEKNILQSASVHESNALEQALAAQSVFQLGFLMVLPMVMEIGLEKGFRTALGDFIIMQLQLASVFFTFQLGTKAHYFGRTILHGGSKYRATGRGFVVFHAKFAENYRLYSRSHFVKGLELVILLVVYQVYGTSYRSSSTYMYITFSMWFLVTSWLFAPFIFNPSGFEWQKTVDDWTDWKRWMGNRGGIGIVLDKSWESWWDIEQEHLKHTNLRGRVLEILLALRFLLYQYGIVYHLNIARRHTTFLVYGLSWAILLSVLLVLKMVSMGRRKFGTDFQVMFRILKALLFLGFLSVMTVLFVVCGLTISDLFASILAFLPTGWAILLIGQALRSVFKGLGFWDSVKELGRAYEYIMGLVIFTPIAVLSWFPFVSEFQTRLLFNQAFSRGLQISMILAGKKDKETPSTKYLGHTEESFGLEHDTNTFNHYYLWT</sequence>
<name>CALS7_ARATH</name>
<keyword id="KW-1003">Cell membrane</keyword>
<keyword id="KW-0133">Cell shape</keyword>
<keyword id="KW-0961">Cell wall biogenesis/degradation</keyword>
<keyword id="KW-0328">Glycosyltransferase</keyword>
<keyword id="KW-0472">Membrane</keyword>
<keyword id="KW-1185">Reference proteome</keyword>
<keyword id="KW-0808">Transferase</keyword>
<keyword id="KW-0812">Transmembrane</keyword>
<keyword id="KW-1133">Transmembrane helix</keyword>
<comment type="function">
    <text evidence="1">Involved in callose synthesis at the forming cell plate during cytokinesis. During plant growth and development, callose is found as a transitory component of the cell plate in dividing cells, is a major component of pollen mother cell walls and pollen tubes, and is found as a structural component of plasmodesmatal canals (By similarity).</text>
</comment>
<comment type="catalytic activity">
    <reaction>
        <text>[(1-&gt;3)-beta-D-glucosyl](n) + UDP-alpha-D-glucose = [(1-&gt;3)-beta-D-glucosyl](n+1) + UDP + H(+)</text>
        <dbReference type="Rhea" id="RHEA:21476"/>
        <dbReference type="Rhea" id="RHEA-COMP:11146"/>
        <dbReference type="Rhea" id="RHEA-COMP:14303"/>
        <dbReference type="ChEBI" id="CHEBI:15378"/>
        <dbReference type="ChEBI" id="CHEBI:37671"/>
        <dbReference type="ChEBI" id="CHEBI:58223"/>
        <dbReference type="ChEBI" id="CHEBI:58885"/>
        <dbReference type="EC" id="2.4.1.34"/>
    </reaction>
</comment>
<comment type="subcellular location">
    <subcellularLocation>
        <location evidence="4">Cell membrane</location>
        <topology evidence="4">Multi-pass membrane protein</topology>
    </subcellularLocation>
</comment>
<comment type="similarity">
    <text evidence="4">Belongs to the glycosyltransferase 48 family.</text>
</comment>
<comment type="sequence caution" evidence="4">
    <conflict type="erroneous gene model prediction">
        <sequence resource="EMBL-CDS" id="AAF24822"/>
    </conflict>
</comment>
<evidence type="ECO:0000250" key="1"/>
<evidence type="ECO:0000255" key="2"/>
<evidence type="ECO:0000256" key="3">
    <source>
        <dbReference type="SAM" id="MobiDB-lite"/>
    </source>
</evidence>
<evidence type="ECO:0000305" key="4"/>
<proteinExistence type="inferred from homology"/>
<feature type="chain" id="PRO_0000334579" description="Callose synthase 7">
    <location>
        <begin position="1"/>
        <end position="1958"/>
    </location>
</feature>
<feature type="topological domain" description="Cytoplasmic" evidence="2">
    <location>
        <begin position="1"/>
        <end position="504"/>
    </location>
</feature>
<feature type="transmembrane region" description="Helical" evidence="2">
    <location>
        <begin position="505"/>
        <end position="525"/>
    </location>
</feature>
<feature type="topological domain" description="Extracellular" evidence="2">
    <location>
        <begin position="526"/>
        <end position="535"/>
    </location>
</feature>
<feature type="transmembrane region" description="Helical" evidence="2">
    <location>
        <begin position="536"/>
        <end position="556"/>
    </location>
</feature>
<feature type="topological domain" description="Cytoplasmic" evidence="2">
    <location>
        <begin position="557"/>
        <end position="569"/>
    </location>
</feature>
<feature type="transmembrane region" description="Helical" evidence="2">
    <location>
        <begin position="570"/>
        <end position="590"/>
    </location>
</feature>
<feature type="topological domain" description="Extracellular" evidence="2">
    <location>
        <begin position="591"/>
        <end position="620"/>
    </location>
</feature>
<feature type="transmembrane region" description="Helical" evidence="2">
    <location>
        <begin position="621"/>
        <end position="641"/>
    </location>
</feature>
<feature type="topological domain" description="Cytoplasmic" evidence="2">
    <location>
        <begin position="642"/>
        <end position="673"/>
    </location>
</feature>
<feature type="transmembrane region" description="Helical" evidence="2">
    <location>
        <begin position="674"/>
        <end position="694"/>
    </location>
</feature>
<feature type="topological domain" description="Extracellular" evidence="2">
    <location>
        <begin position="695"/>
        <end position="730"/>
    </location>
</feature>
<feature type="transmembrane region" description="Helical" evidence="2">
    <location>
        <begin position="731"/>
        <end position="751"/>
    </location>
</feature>
<feature type="topological domain" description="Cytoplasmic" evidence="2">
    <location>
        <begin position="752"/>
        <end position="1496"/>
    </location>
</feature>
<feature type="transmembrane region" description="Helical" evidence="2">
    <location>
        <begin position="1497"/>
        <end position="1517"/>
    </location>
</feature>
<feature type="topological domain" description="Extracellular" evidence="2">
    <location>
        <begin position="1518"/>
        <end position="1547"/>
    </location>
</feature>
<feature type="transmembrane region" description="Helical" evidence="2">
    <location>
        <begin position="1548"/>
        <end position="1568"/>
    </location>
</feature>
<feature type="topological domain" description="Cytoplasmic" evidence="2">
    <location>
        <begin position="1569"/>
        <end position="1576"/>
    </location>
</feature>
<feature type="transmembrane region" description="Helical" evidence="2">
    <location>
        <begin position="1577"/>
        <end position="1597"/>
    </location>
</feature>
<feature type="topological domain" description="Extracellular" evidence="2">
    <location>
        <begin position="1598"/>
        <end position="1640"/>
    </location>
</feature>
<feature type="transmembrane region" description="Helical" evidence="2">
    <location>
        <begin position="1641"/>
        <end position="1661"/>
    </location>
</feature>
<feature type="topological domain" description="Cytoplasmic" evidence="2">
    <location>
        <begin position="1662"/>
        <end position="1667"/>
    </location>
</feature>
<feature type="transmembrane region" description="Helical" evidence="2">
    <location>
        <begin position="1668"/>
        <end position="1688"/>
    </location>
</feature>
<feature type="topological domain" description="Extracellular" evidence="2">
    <location>
        <begin position="1689"/>
        <end position="1742"/>
    </location>
</feature>
<feature type="transmembrane region" description="Helical" evidence="2">
    <location>
        <begin position="1743"/>
        <end position="1763"/>
    </location>
</feature>
<feature type="topological domain" description="Cytoplasmic" evidence="2">
    <location>
        <begin position="1764"/>
        <end position="1771"/>
    </location>
</feature>
<feature type="transmembrane region" description="Helical" evidence="2">
    <location>
        <begin position="1772"/>
        <end position="1792"/>
    </location>
</feature>
<feature type="topological domain" description="Extracellular" evidence="2">
    <location>
        <begin position="1793"/>
        <end position="1812"/>
    </location>
</feature>
<feature type="transmembrane region" description="Helical" evidence="2">
    <location>
        <begin position="1813"/>
        <end position="1833"/>
    </location>
</feature>
<feature type="topological domain" description="Cytoplasmic" evidence="2">
    <location>
        <begin position="1834"/>
        <end position="1835"/>
    </location>
</feature>
<feature type="transmembrane region" description="Helical" evidence="2">
    <location>
        <begin position="1836"/>
        <end position="1856"/>
    </location>
</feature>
<feature type="topological domain" description="Extracellular" evidence="2">
    <location>
        <begin position="1857"/>
        <end position="1878"/>
    </location>
</feature>
<feature type="transmembrane region" description="Helical" evidence="2">
    <location>
        <begin position="1879"/>
        <end position="1899"/>
    </location>
</feature>
<feature type="topological domain" description="Cytoplasmic" evidence="2">
    <location>
        <begin position="1900"/>
        <end position="1958"/>
    </location>
</feature>
<feature type="region of interest" description="Disordered" evidence="3">
    <location>
        <begin position="1"/>
        <end position="29"/>
    </location>
</feature>
<gene>
    <name type="primary">CALS7</name>
    <name type="synonym">GSL7</name>
    <name type="ordered locus">At1g06490</name>
    <name type="ORF">F12K11.17</name>
</gene>
<accession>Q9SHJ3</accession>